<dbReference type="EMBL" id="D64154">
    <property type="protein sequence ID" value="BAA11023.1"/>
    <property type="molecule type" value="mRNA"/>
</dbReference>
<dbReference type="EMBL" id="AL354836">
    <property type="status" value="NOT_ANNOTATED_CDS"/>
    <property type="molecule type" value="Genomic_DNA"/>
</dbReference>
<dbReference type="EMBL" id="BR000321">
    <property type="protein sequence ID" value="FAA00246.1"/>
    <property type="molecule type" value="mRNA"/>
</dbReference>
<dbReference type="EMBL" id="BC010733">
    <property type="protein sequence ID" value="AAH10733.1"/>
    <property type="molecule type" value="mRNA"/>
</dbReference>
<dbReference type="EMBL" id="BC017245">
    <property type="protein sequence ID" value="AAH17245.1"/>
    <property type="molecule type" value="mRNA"/>
</dbReference>
<dbReference type="CCDS" id="CCDS13496.1"/>
<dbReference type="PIR" id="I52703">
    <property type="entry name" value="I52703"/>
</dbReference>
<dbReference type="RefSeq" id="NP_001268366.1">
    <property type="nucleotide sequence ID" value="NM_001281437.1"/>
</dbReference>
<dbReference type="RefSeq" id="NP_001268367.1">
    <property type="nucleotide sequence ID" value="NM_001281438.1"/>
</dbReference>
<dbReference type="RefSeq" id="NP_008933.2">
    <property type="nucleotide sequence ID" value="NM_007002.3"/>
</dbReference>
<dbReference type="RefSeq" id="NP_783163.1">
    <property type="nucleotide sequence ID" value="NM_175573.2"/>
</dbReference>
<dbReference type="RefSeq" id="XP_005260314.1">
    <property type="nucleotide sequence ID" value="XM_005260257.1"/>
</dbReference>
<dbReference type="PDB" id="2KQZ">
    <property type="method" value="NMR"/>
    <property type="chains" value="A=253-407"/>
</dbReference>
<dbReference type="PDB" id="2KR0">
    <property type="method" value="NMR"/>
    <property type="chains" value="A=1-407"/>
</dbReference>
<dbReference type="PDB" id="2L5V">
    <property type="method" value="NMR"/>
    <property type="chains" value="A=260-407"/>
</dbReference>
<dbReference type="PDB" id="2MKZ">
    <property type="method" value="NMR"/>
    <property type="chains" value="A=270-407"/>
</dbReference>
<dbReference type="PDB" id="2NBV">
    <property type="method" value="NMR"/>
    <property type="chains" value="A=1-150"/>
</dbReference>
<dbReference type="PDB" id="4UEL">
    <property type="method" value="X-ray"/>
    <property type="resolution" value="2.30 A"/>
    <property type="chains" value="C=266-388"/>
</dbReference>
<dbReference type="PDB" id="4UEM">
    <property type="method" value="X-ray"/>
    <property type="resolution" value="2.82 A"/>
    <property type="chains" value="B=266-388"/>
</dbReference>
<dbReference type="PDB" id="4WLQ">
    <property type="method" value="X-ray"/>
    <property type="resolution" value="2.85 A"/>
    <property type="chains" value="B=286-384"/>
</dbReference>
<dbReference type="PDB" id="4WLR">
    <property type="method" value="X-ray"/>
    <property type="resolution" value="2.00 A"/>
    <property type="chains" value="B=285-386"/>
</dbReference>
<dbReference type="PDB" id="5IRS">
    <property type="method" value="X-ray"/>
    <property type="resolution" value="1.80 A"/>
    <property type="chains" value="A=2-150"/>
</dbReference>
<dbReference type="PDB" id="5V1Y">
    <property type="method" value="X-ray"/>
    <property type="resolution" value="1.42 A"/>
    <property type="chains" value="A/B=19-132"/>
</dbReference>
<dbReference type="PDB" id="5V1Z">
    <property type="method" value="X-ray"/>
    <property type="resolution" value="2.00 A"/>
    <property type="chains" value="A/B=19-132"/>
</dbReference>
<dbReference type="PDB" id="5YMY">
    <property type="method" value="NMR"/>
    <property type="chains" value="C=1-150"/>
</dbReference>
<dbReference type="PDB" id="6CO4">
    <property type="method" value="NMR"/>
    <property type="chains" value="A=1-150"/>
</dbReference>
<dbReference type="PDB" id="6OI4">
    <property type="method" value="X-ray"/>
    <property type="resolution" value="1.76 A"/>
    <property type="chains" value="A/B=20-132"/>
</dbReference>
<dbReference type="PDB" id="6UYI">
    <property type="method" value="NMR"/>
    <property type="chains" value="A=1-150"/>
</dbReference>
<dbReference type="PDB" id="6UYJ">
    <property type="method" value="NMR"/>
    <property type="chains" value="A=1-150"/>
</dbReference>
<dbReference type="PDB" id="7KXI">
    <property type="method" value="NMR"/>
    <property type="chains" value="A=1-150"/>
</dbReference>
<dbReference type="PDB" id="8FTQ">
    <property type="method" value="X-ray"/>
    <property type="resolution" value="2.10 A"/>
    <property type="chains" value="A/B=2-150"/>
</dbReference>
<dbReference type="PDBsum" id="2KQZ"/>
<dbReference type="PDBsum" id="2KR0"/>
<dbReference type="PDBsum" id="2L5V"/>
<dbReference type="PDBsum" id="2MKZ"/>
<dbReference type="PDBsum" id="2NBV"/>
<dbReference type="PDBsum" id="4UEL"/>
<dbReference type="PDBsum" id="4UEM"/>
<dbReference type="PDBsum" id="4WLQ"/>
<dbReference type="PDBsum" id="4WLR"/>
<dbReference type="PDBsum" id="5IRS"/>
<dbReference type="PDBsum" id="5V1Y"/>
<dbReference type="PDBsum" id="5V1Z"/>
<dbReference type="PDBsum" id="5YMY"/>
<dbReference type="PDBsum" id="6CO4"/>
<dbReference type="PDBsum" id="6OI4"/>
<dbReference type="PDBsum" id="6UYI"/>
<dbReference type="PDBsum" id="6UYJ"/>
<dbReference type="PDBsum" id="7KXI"/>
<dbReference type="PDBsum" id="8FTQ"/>
<dbReference type="BMRB" id="Q16186"/>
<dbReference type="EMDB" id="EMD-60138"/>
<dbReference type="EMDB" id="EMD-60139"/>
<dbReference type="SMR" id="Q16186"/>
<dbReference type="BioGRID" id="116235">
    <property type="interactions" value="271"/>
</dbReference>
<dbReference type="ComplexPortal" id="CPX-5993">
    <property type="entry name" value="26S proteasome complex"/>
</dbReference>
<dbReference type="ComplexPortal" id="CPX-8964">
    <property type="entry name" value="19S proteasome regulatory complex"/>
</dbReference>
<dbReference type="ComplexPortal" id="CPX-9082">
    <property type="entry name" value="19S-20S-PA28-alphabeta hybrid proteasome complex"/>
</dbReference>
<dbReference type="ComplexPortal" id="CPX-9085">
    <property type="entry name" value="19S-20S-PA28-gamma hybrid proteasome complex"/>
</dbReference>
<dbReference type="ComplexPortal" id="CPX-9086">
    <property type="entry name" value="30S proteasome complex"/>
</dbReference>
<dbReference type="DIP" id="DIP-42668N"/>
<dbReference type="FunCoup" id="Q16186">
    <property type="interactions" value="2057"/>
</dbReference>
<dbReference type="IntAct" id="Q16186">
    <property type="interactions" value="93"/>
</dbReference>
<dbReference type="MINT" id="Q16186"/>
<dbReference type="STRING" id="9606.ENSP00000478877"/>
<dbReference type="BindingDB" id="Q16186"/>
<dbReference type="ChEMBL" id="CHEMBL3710002"/>
<dbReference type="GlyCosmos" id="Q16186">
    <property type="glycosylation" value="10 sites, 2 glycans"/>
</dbReference>
<dbReference type="GlyGen" id="Q16186">
    <property type="glycosylation" value="11 sites, 2 O-linked glycans (10 sites)"/>
</dbReference>
<dbReference type="iPTMnet" id="Q16186"/>
<dbReference type="PhosphoSitePlus" id="Q16186"/>
<dbReference type="SwissPalm" id="Q16186"/>
<dbReference type="BioMuta" id="ADRM1"/>
<dbReference type="DMDM" id="20141265"/>
<dbReference type="jPOST" id="Q16186"/>
<dbReference type="MassIVE" id="Q16186"/>
<dbReference type="PaxDb" id="9606-ENSP00000478877"/>
<dbReference type="PeptideAtlas" id="Q16186"/>
<dbReference type="ProteomicsDB" id="60836"/>
<dbReference type="Pumba" id="Q16186"/>
<dbReference type="Antibodypedia" id="29483">
    <property type="antibodies" value="304 antibodies from 34 providers"/>
</dbReference>
<dbReference type="DNASU" id="11047"/>
<dbReference type="Ensembl" id="ENST00000253003.7">
    <property type="protein sequence ID" value="ENSP00000253003.2"/>
    <property type="gene ID" value="ENSG00000130706.13"/>
</dbReference>
<dbReference type="Ensembl" id="ENST00000491935.5">
    <property type="protein sequence ID" value="ENSP00000478877.1"/>
    <property type="gene ID" value="ENSG00000130706.13"/>
</dbReference>
<dbReference type="GeneID" id="11047"/>
<dbReference type="KEGG" id="hsa:11047"/>
<dbReference type="MANE-Select" id="ENST00000253003.7">
    <property type="protein sequence ID" value="ENSP00000253003.2"/>
    <property type="RefSeq nucleotide sequence ID" value="NM_007002.4"/>
    <property type="RefSeq protein sequence ID" value="NP_008933.2"/>
</dbReference>
<dbReference type="UCSC" id="uc002ycn.5">
    <property type="organism name" value="human"/>
</dbReference>
<dbReference type="AGR" id="HGNC:15759"/>
<dbReference type="CTD" id="11047"/>
<dbReference type="DisGeNET" id="11047"/>
<dbReference type="GeneCards" id="ADRM1"/>
<dbReference type="HGNC" id="HGNC:15759">
    <property type="gene designation" value="ADRM1"/>
</dbReference>
<dbReference type="HPA" id="ENSG00000130706">
    <property type="expression patterns" value="Tissue enhanced (skeletal)"/>
</dbReference>
<dbReference type="MalaCards" id="ADRM1"/>
<dbReference type="MIM" id="610650">
    <property type="type" value="gene"/>
</dbReference>
<dbReference type="neXtProt" id="NX_Q16186"/>
<dbReference type="OpenTargets" id="ENSG00000130706"/>
<dbReference type="PharmGKB" id="PA24599"/>
<dbReference type="VEuPathDB" id="HostDB:ENSG00000130706"/>
<dbReference type="eggNOG" id="KOG3037">
    <property type="taxonomic scope" value="Eukaryota"/>
</dbReference>
<dbReference type="GeneTree" id="ENSGT00390000013839"/>
<dbReference type="HOGENOM" id="CLU_041798_2_0_1"/>
<dbReference type="InParanoid" id="Q16186"/>
<dbReference type="OMA" id="SNQRHFF"/>
<dbReference type="OrthoDB" id="340431at2759"/>
<dbReference type="PAN-GO" id="Q16186">
    <property type="GO annotations" value="5 GO annotations based on evolutionary models"/>
</dbReference>
<dbReference type="PhylomeDB" id="Q16186"/>
<dbReference type="TreeFam" id="TF313410"/>
<dbReference type="PathwayCommons" id="Q16186"/>
<dbReference type="Reactome" id="R-HSA-1169091">
    <property type="pathway name" value="Activation of NF-kappaB in B cells"/>
</dbReference>
<dbReference type="Reactome" id="R-HSA-1234176">
    <property type="pathway name" value="Oxygen-dependent proline hydroxylation of Hypoxia-inducible Factor Alpha"/>
</dbReference>
<dbReference type="Reactome" id="R-HSA-1236974">
    <property type="pathway name" value="ER-Phagosome pathway"/>
</dbReference>
<dbReference type="Reactome" id="R-HSA-1236978">
    <property type="pathway name" value="Cross-presentation of soluble exogenous antigens (endosomes)"/>
</dbReference>
<dbReference type="Reactome" id="R-HSA-174084">
    <property type="pathway name" value="Autodegradation of Cdh1 by Cdh1:APC/C"/>
</dbReference>
<dbReference type="Reactome" id="R-HSA-174113">
    <property type="pathway name" value="SCF-beta-TrCP mediated degradation of Emi1"/>
</dbReference>
<dbReference type="Reactome" id="R-HSA-174154">
    <property type="pathway name" value="APC/C:Cdc20 mediated degradation of Securin"/>
</dbReference>
<dbReference type="Reactome" id="R-HSA-174178">
    <property type="pathway name" value="APC/C:Cdh1 mediated degradation of Cdc20 and other APC/C:Cdh1 targeted proteins in late mitosis/early G1"/>
</dbReference>
<dbReference type="Reactome" id="R-HSA-174184">
    <property type="pathway name" value="Cdc20:Phospho-APC/C mediated degradation of Cyclin A"/>
</dbReference>
<dbReference type="Reactome" id="R-HSA-180534">
    <property type="pathway name" value="Vpu mediated degradation of CD4"/>
</dbReference>
<dbReference type="Reactome" id="R-HSA-180585">
    <property type="pathway name" value="Vif-mediated degradation of APOBEC3G"/>
</dbReference>
<dbReference type="Reactome" id="R-HSA-187577">
    <property type="pathway name" value="SCF(Skp2)-mediated degradation of p27/p21"/>
</dbReference>
<dbReference type="Reactome" id="R-HSA-195253">
    <property type="pathway name" value="Degradation of beta-catenin by the destruction complex"/>
</dbReference>
<dbReference type="Reactome" id="R-HSA-202424">
    <property type="pathway name" value="Downstream TCR signaling"/>
</dbReference>
<dbReference type="Reactome" id="R-HSA-211733">
    <property type="pathway name" value="Regulation of activated PAK-2p34 by proteasome mediated degradation"/>
</dbReference>
<dbReference type="Reactome" id="R-HSA-2467813">
    <property type="pathway name" value="Separation of Sister Chromatids"/>
</dbReference>
<dbReference type="Reactome" id="R-HSA-2871837">
    <property type="pathway name" value="FCERI mediated NF-kB activation"/>
</dbReference>
<dbReference type="Reactome" id="R-HSA-349425">
    <property type="pathway name" value="Autodegradation of the E3 ubiquitin ligase COP1"/>
</dbReference>
<dbReference type="Reactome" id="R-HSA-350562">
    <property type="pathway name" value="Regulation of ornithine decarboxylase (ODC)"/>
</dbReference>
<dbReference type="Reactome" id="R-HSA-382556">
    <property type="pathway name" value="ABC-family proteins mediated transport"/>
</dbReference>
<dbReference type="Reactome" id="R-HSA-450408">
    <property type="pathway name" value="AUF1 (hnRNP D0) binds and destabilizes mRNA"/>
</dbReference>
<dbReference type="Reactome" id="R-HSA-4608870">
    <property type="pathway name" value="Asymmetric localization of PCP proteins"/>
</dbReference>
<dbReference type="Reactome" id="R-HSA-4641257">
    <property type="pathway name" value="Degradation of AXIN"/>
</dbReference>
<dbReference type="Reactome" id="R-HSA-4641258">
    <property type="pathway name" value="Degradation of DVL"/>
</dbReference>
<dbReference type="Reactome" id="R-HSA-5358346">
    <property type="pathway name" value="Hedgehog ligand biogenesis"/>
</dbReference>
<dbReference type="Reactome" id="R-HSA-5362768">
    <property type="pathway name" value="Hh mutants are degraded by ERAD"/>
</dbReference>
<dbReference type="Reactome" id="R-HSA-5607761">
    <property type="pathway name" value="Dectin-1 mediated noncanonical NF-kB signaling"/>
</dbReference>
<dbReference type="Reactome" id="R-HSA-5607764">
    <property type="pathway name" value="CLEC7A (Dectin-1) signaling"/>
</dbReference>
<dbReference type="Reactome" id="R-HSA-5610780">
    <property type="pathway name" value="Degradation of GLI1 by the proteasome"/>
</dbReference>
<dbReference type="Reactome" id="R-HSA-5610783">
    <property type="pathway name" value="Degradation of GLI2 by the proteasome"/>
</dbReference>
<dbReference type="Reactome" id="R-HSA-5610785">
    <property type="pathway name" value="GLI3 is processed to GLI3R by the proteasome"/>
</dbReference>
<dbReference type="Reactome" id="R-HSA-5632684">
    <property type="pathway name" value="Hedgehog 'on' state"/>
</dbReference>
<dbReference type="Reactome" id="R-HSA-5658442">
    <property type="pathway name" value="Regulation of RAS by GAPs"/>
</dbReference>
<dbReference type="Reactome" id="R-HSA-5668541">
    <property type="pathway name" value="TNFR2 non-canonical NF-kB pathway"/>
</dbReference>
<dbReference type="Reactome" id="R-HSA-5676590">
    <property type="pathway name" value="NIK--&gt;noncanonical NF-kB signaling"/>
</dbReference>
<dbReference type="Reactome" id="R-HSA-5678895">
    <property type="pathway name" value="Defective CFTR causes cystic fibrosis"/>
</dbReference>
<dbReference type="Reactome" id="R-HSA-5687128">
    <property type="pathway name" value="MAPK6/MAPK4 signaling"/>
</dbReference>
<dbReference type="Reactome" id="R-HSA-5689603">
    <property type="pathway name" value="UCH proteinases"/>
</dbReference>
<dbReference type="Reactome" id="R-HSA-5689880">
    <property type="pathway name" value="Ub-specific processing proteases"/>
</dbReference>
<dbReference type="Reactome" id="R-HSA-68867">
    <property type="pathway name" value="Assembly of the pre-replicative complex"/>
</dbReference>
<dbReference type="Reactome" id="R-HSA-68949">
    <property type="pathway name" value="Orc1 removal from chromatin"/>
</dbReference>
<dbReference type="Reactome" id="R-HSA-69017">
    <property type="pathway name" value="CDK-mediated phosphorylation and removal of Cdc6"/>
</dbReference>
<dbReference type="Reactome" id="R-HSA-69481">
    <property type="pathway name" value="G2/M Checkpoints"/>
</dbReference>
<dbReference type="Reactome" id="R-HSA-69601">
    <property type="pathway name" value="Ubiquitin Mediated Degradation of Phosphorylated Cdc25A"/>
</dbReference>
<dbReference type="Reactome" id="R-HSA-75815">
    <property type="pathway name" value="Ubiquitin-dependent degradation of Cyclin D"/>
</dbReference>
<dbReference type="Reactome" id="R-HSA-8852276">
    <property type="pathway name" value="The role of GTSE1 in G2/M progression after G2 checkpoint"/>
</dbReference>
<dbReference type="Reactome" id="R-HSA-8854050">
    <property type="pathway name" value="FBXL7 down-regulates AURKA during mitotic entry and in early mitosis"/>
</dbReference>
<dbReference type="Reactome" id="R-HSA-8939236">
    <property type="pathway name" value="RUNX1 regulates transcription of genes involved in differentiation of HSCs"/>
</dbReference>
<dbReference type="Reactome" id="R-HSA-8939902">
    <property type="pathway name" value="Regulation of RUNX2 expression and activity"/>
</dbReference>
<dbReference type="Reactome" id="R-HSA-8941858">
    <property type="pathway name" value="Regulation of RUNX3 expression and activity"/>
</dbReference>
<dbReference type="Reactome" id="R-HSA-8948751">
    <property type="pathway name" value="Regulation of PTEN stability and activity"/>
</dbReference>
<dbReference type="Reactome" id="R-HSA-8951664">
    <property type="pathway name" value="Neddylation"/>
</dbReference>
<dbReference type="Reactome" id="R-HSA-9010553">
    <property type="pathway name" value="Regulation of expression of SLITs and ROBOs"/>
</dbReference>
<dbReference type="Reactome" id="R-HSA-9020702">
    <property type="pathway name" value="Interleukin-1 signaling"/>
</dbReference>
<dbReference type="Reactome" id="R-HSA-9604323">
    <property type="pathway name" value="Negative regulation of NOTCH4 signaling"/>
</dbReference>
<dbReference type="Reactome" id="R-HSA-9755511">
    <property type="pathway name" value="KEAP1-NFE2L2 pathway"/>
</dbReference>
<dbReference type="Reactome" id="R-HSA-9762114">
    <property type="pathway name" value="GSK3B and BTRC:CUL1-mediated-degradation of NFE2L2"/>
</dbReference>
<dbReference type="Reactome" id="R-HSA-9824272">
    <property type="pathway name" value="Somitogenesis"/>
</dbReference>
<dbReference type="Reactome" id="R-HSA-983168">
    <property type="pathway name" value="Antigen processing: Ubiquitination &amp; Proteasome degradation"/>
</dbReference>
<dbReference type="Reactome" id="R-HSA-9907900">
    <property type="pathway name" value="Proteasome assembly"/>
</dbReference>
<dbReference type="SignaLink" id="Q16186"/>
<dbReference type="SIGNOR" id="Q16186"/>
<dbReference type="BioGRID-ORCS" id="11047">
    <property type="hits" value="253 hits in 1159 CRISPR screens"/>
</dbReference>
<dbReference type="ChiTaRS" id="ADRM1">
    <property type="organism name" value="human"/>
</dbReference>
<dbReference type="EvolutionaryTrace" id="Q16186"/>
<dbReference type="GeneWiki" id="ADRM1"/>
<dbReference type="GenomeRNAi" id="11047"/>
<dbReference type="Pharos" id="Q16186">
    <property type="development level" value="Tbio"/>
</dbReference>
<dbReference type="PRO" id="PR:Q16186"/>
<dbReference type="Proteomes" id="UP000005640">
    <property type="component" value="Chromosome 20"/>
</dbReference>
<dbReference type="RNAct" id="Q16186">
    <property type="molecule type" value="protein"/>
</dbReference>
<dbReference type="Bgee" id="ENSG00000130706">
    <property type="expression patterns" value="Expressed in gastrocnemius and 188 other cell types or tissues"/>
</dbReference>
<dbReference type="ExpressionAtlas" id="Q16186">
    <property type="expression patterns" value="baseline and differential"/>
</dbReference>
<dbReference type="GO" id="GO:0005829">
    <property type="term" value="C:cytosol"/>
    <property type="evidence" value="ECO:0000314"/>
    <property type="project" value="HPA"/>
</dbReference>
<dbReference type="GO" id="GO:0005654">
    <property type="term" value="C:nucleoplasm"/>
    <property type="evidence" value="ECO:0000314"/>
    <property type="project" value="HPA"/>
</dbReference>
<dbReference type="GO" id="GO:0005886">
    <property type="term" value="C:plasma membrane"/>
    <property type="evidence" value="ECO:0000314"/>
    <property type="project" value="HPA"/>
</dbReference>
<dbReference type="GO" id="GO:0000502">
    <property type="term" value="C:proteasome complex"/>
    <property type="evidence" value="ECO:0000314"/>
    <property type="project" value="UniProtKB"/>
</dbReference>
<dbReference type="GO" id="GO:0008541">
    <property type="term" value="C:proteasome regulatory particle, lid subcomplex"/>
    <property type="evidence" value="ECO:0000318"/>
    <property type="project" value="GO_Central"/>
</dbReference>
<dbReference type="GO" id="GO:0061133">
    <property type="term" value="F:endopeptidase activator activity"/>
    <property type="evidence" value="ECO:0000314"/>
    <property type="project" value="UniProtKB"/>
</dbReference>
<dbReference type="GO" id="GO:0140678">
    <property type="term" value="F:molecular function inhibitor activity"/>
    <property type="evidence" value="ECO:0000269"/>
    <property type="project" value="DisProt"/>
</dbReference>
<dbReference type="GO" id="GO:0002020">
    <property type="term" value="F:protease binding"/>
    <property type="evidence" value="ECO:0000353"/>
    <property type="project" value="UniProtKB"/>
</dbReference>
<dbReference type="GO" id="GO:0070628">
    <property type="term" value="F:proteasome binding"/>
    <property type="evidence" value="ECO:0000314"/>
    <property type="project" value="UniProtKB"/>
</dbReference>
<dbReference type="GO" id="GO:0043248">
    <property type="term" value="P:proteasome assembly"/>
    <property type="evidence" value="ECO:0000314"/>
    <property type="project" value="UniProtKB"/>
</dbReference>
<dbReference type="GO" id="GO:0043161">
    <property type="term" value="P:proteasome-mediated ubiquitin-dependent protein catabolic process"/>
    <property type="evidence" value="ECO:0000303"/>
    <property type="project" value="ComplexPortal"/>
</dbReference>
<dbReference type="GO" id="GO:0006368">
    <property type="term" value="P:transcription elongation by RNA polymerase II"/>
    <property type="evidence" value="ECO:0000315"/>
    <property type="project" value="UniProtKB"/>
</dbReference>
<dbReference type="CDD" id="cd13314">
    <property type="entry name" value="PH_Rpn13"/>
    <property type="match status" value="1"/>
</dbReference>
<dbReference type="DisProt" id="DP00839"/>
<dbReference type="FunFam" id="1.10.2020.20:FF:000001">
    <property type="entry name" value="Proteasomal ubiquitin receptor ADRM1"/>
    <property type="match status" value="1"/>
</dbReference>
<dbReference type="FunFam" id="2.30.29.70:FF:000001">
    <property type="entry name" value="Proteasomal ubiquitin receptor ADRM1"/>
    <property type="match status" value="1"/>
</dbReference>
<dbReference type="Gene3D" id="1.10.2020.20">
    <property type="match status" value="1"/>
</dbReference>
<dbReference type="Gene3D" id="2.30.29.70">
    <property type="entry name" value="Proteasomal ubiquitin receptor Rpn13/ADRM1"/>
    <property type="match status" value="1"/>
</dbReference>
<dbReference type="IDEAL" id="IID00671"/>
<dbReference type="InterPro" id="IPR044867">
    <property type="entry name" value="DEUBAD_dom"/>
</dbReference>
<dbReference type="InterPro" id="IPR006773">
    <property type="entry name" value="Rpn13/ADRM1"/>
</dbReference>
<dbReference type="InterPro" id="IPR044868">
    <property type="entry name" value="Rpn13/ADRM1_Pru"/>
</dbReference>
<dbReference type="InterPro" id="IPR038633">
    <property type="entry name" value="Rpn13/ADRM1_Pru_sf"/>
</dbReference>
<dbReference type="InterPro" id="IPR032368">
    <property type="entry name" value="RPN13_DEUBAD"/>
</dbReference>
<dbReference type="InterPro" id="IPR038108">
    <property type="entry name" value="RPN13_DEUBAD_sf"/>
</dbReference>
<dbReference type="PANTHER" id="PTHR12225">
    <property type="entry name" value="ADHESION REGULATING MOLECULE 1 110 KDA CELL MEMBRANE GLYCOPROTEIN"/>
    <property type="match status" value="1"/>
</dbReference>
<dbReference type="PANTHER" id="PTHR12225:SF0">
    <property type="entry name" value="PROTEASOMAL UBIQUITIN RECEPTOR ADRM1"/>
    <property type="match status" value="1"/>
</dbReference>
<dbReference type="Pfam" id="PF04683">
    <property type="entry name" value="Rpn13_ADRM1_Pru"/>
    <property type="match status" value="1"/>
</dbReference>
<dbReference type="Pfam" id="PF16550">
    <property type="entry name" value="RPN13_C"/>
    <property type="match status" value="1"/>
</dbReference>
<dbReference type="PROSITE" id="PS51916">
    <property type="entry name" value="DEUBAD"/>
    <property type="match status" value="1"/>
</dbReference>
<dbReference type="PROSITE" id="PS51917">
    <property type="entry name" value="PRU"/>
    <property type="match status" value="1"/>
</dbReference>
<protein>
    <recommendedName>
        <fullName>Proteasomal ubiquitin receptor ADRM1</fullName>
    </recommendedName>
    <alternativeName>
        <fullName>110 kDa cell membrane glycoprotein</fullName>
        <shortName>Gp110</shortName>
    </alternativeName>
    <alternativeName>
        <fullName>Adhesion-regulating molecule 1</fullName>
        <shortName>ARM-1</shortName>
    </alternativeName>
    <alternativeName>
        <fullName>Proteasome regulatory particle non-ATPase 13</fullName>
        <shortName>hRpn13</shortName>
    </alternativeName>
    <alternativeName>
        <fullName>Rpn13 homolog</fullName>
    </alternativeName>
</protein>
<keyword id="KW-0002">3D-structure</keyword>
<keyword id="KW-0007">Acetylation</keyword>
<keyword id="KW-0963">Cytoplasm</keyword>
<keyword id="KW-1017">Isopeptide bond</keyword>
<keyword id="KW-0539">Nucleus</keyword>
<keyword id="KW-0597">Phosphoprotein</keyword>
<keyword id="KW-0647">Proteasome</keyword>
<keyword id="KW-1267">Proteomics identification</keyword>
<keyword id="KW-1185">Reference proteome</keyword>
<keyword id="KW-0832">Ubl conjugation</keyword>
<accession>Q16186</accession>
<accession>A0PKB1</accession>
<accession>Q96FJ7</accession>
<accession>Q9H1P2</accession>
<reference key="1">
    <citation type="journal article" date="1994" name="Cancer Res.">
        <title>Molecular cloning and characterization of the complementary DNA of an M(r) 110,000 antigen expressed by human gastric carcinoma cells and upregulated by gamma-interferon.</title>
        <authorList>
            <person name="Shimada S."/>
            <person name="Ogawa M."/>
            <person name="Takahashi M."/>
            <person name="Schlom J."/>
            <person name="Greiner J.W."/>
        </authorList>
    </citation>
    <scope>NUCLEOTIDE SEQUENCE [MRNA]</scope>
</reference>
<reference key="2">
    <citation type="journal article" date="2006" name="EMBO J.">
        <title>A novel proteasome-interacting protein recruits the deubiquitinating enzyme UCH37 to 26S proteasomes.</title>
        <authorList>
            <person name="Hamazaki J."/>
            <person name="Iemura S."/>
            <person name="Natsume T."/>
            <person name="Yashiroda H."/>
            <person name="Tanaka K."/>
            <person name="Murata S."/>
        </authorList>
    </citation>
    <scope>NUCLEOTIDE SEQUENCE [MRNA]</scope>
    <scope>FUNCTION</scope>
    <scope>INTERACTION WITH PSMD1 AND UCHL5</scope>
    <scope>SUBCELLULAR LOCATION</scope>
    <scope>IDENTIFICATION BY MASS SPECTROMETRY</scope>
</reference>
<reference key="3">
    <citation type="journal article" date="2001" name="Nature">
        <title>The DNA sequence and comparative analysis of human chromosome 20.</title>
        <authorList>
            <person name="Deloukas P."/>
            <person name="Matthews L.H."/>
            <person name="Ashurst J.L."/>
            <person name="Burton J."/>
            <person name="Gilbert J.G.R."/>
            <person name="Jones M."/>
            <person name="Stavrides G."/>
            <person name="Almeida J.P."/>
            <person name="Babbage A.K."/>
            <person name="Bagguley C.L."/>
            <person name="Bailey J."/>
            <person name="Barlow K.F."/>
            <person name="Bates K.N."/>
            <person name="Beard L.M."/>
            <person name="Beare D.M."/>
            <person name="Beasley O.P."/>
            <person name="Bird C.P."/>
            <person name="Blakey S.E."/>
            <person name="Bridgeman A.M."/>
            <person name="Brown A.J."/>
            <person name="Buck D."/>
            <person name="Burrill W.D."/>
            <person name="Butler A.P."/>
            <person name="Carder C."/>
            <person name="Carter N.P."/>
            <person name="Chapman J.C."/>
            <person name="Clamp M."/>
            <person name="Clark G."/>
            <person name="Clark L.N."/>
            <person name="Clark S.Y."/>
            <person name="Clee C.M."/>
            <person name="Clegg S."/>
            <person name="Cobley V.E."/>
            <person name="Collier R.E."/>
            <person name="Connor R.E."/>
            <person name="Corby N.R."/>
            <person name="Coulson A."/>
            <person name="Coville G.J."/>
            <person name="Deadman R."/>
            <person name="Dhami P.D."/>
            <person name="Dunn M."/>
            <person name="Ellington A.G."/>
            <person name="Frankland J.A."/>
            <person name="Fraser A."/>
            <person name="French L."/>
            <person name="Garner P."/>
            <person name="Grafham D.V."/>
            <person name="Griffiths C."/>
            <person name="Griffiths M.N.D."/>
            <person name="Gwilliam R."/>
            <person name="Hall R.E."/>
            <person name="Hammond S."/>
            <person name="Harley J.L."/>
            <person name="Heath P.D."/>
            <person name="Ho S."/>
            <person name="Holden J.L."/>
            <person name="Howden P.J."/>
            <person name="Huckle E."/>
            <person name="Hunt A.R."/>
            <person name="Hunt S.E."/>
            <person name="Jekosch K."/>
            <person name="Johnson C.M."/>
            <person name="Johnson D."/>
            <person name="Kay M.P."/>
            <person name="Kimberley A.M."/>
            <person name="King A."/>
            <person name="Knights A."/>
            <person name="Laird G.K."/>
            <person name="Lawlor S."/>
            <person name="Lehvaeslaiho M.H."/>
            <person name="Leversha M.A."/>
            <person name="Lloyd C."/>
            <person name="Lloyd D.M."/>
            <person name="Lovell J.D."/>
            <person name="Marsh V.L."/>
            <person name="Martin S.L."/>
            <person name="McConnachie L.J."/>
            <person name="McLay K."/>
            <person name="McMurray A.A."/>
            <person name="Milne S.A."/>
            <person name="Mistry D."/>
            <person name="Moore M.J.F."/>
            <person name="Mullikin J.C."/>
            <person name="Nickerson T."/>
            <person name="Oliver K."/>
            <person name="Parker A."/>
            <person name="Patel R."/>
            <person name="Pearce T.A.V."/>
            <person name="Peck A.I."/>
            <person name="Phillimore B.J.C.T."/>
            <person name="Prathalingam S.R."/>
            <person name="Plumb R.W."/>
            <person name="Ramsay H."/>
            <person name="Rice C.M."/>
            <person name="Ross M.T."/>
            <person name="Scott C.E."/>
            <person name="Sehra H.K."/>
            <person name="Shownkeen R."/>
            <person name="Sims S."/>
            <person name="Skuce C.D."/>
            <person name="Smith M.L."/>
            <person name="Soderlund C."/>
            <person name="Steward C.A."/>
            <person name="Sulston J.E."/>
            <person name="Swann R.M."/>
            <person name="Sycamore N."/>
            <person name="Taylor R."/>
            <person name="Tee L."/>
            <person name="Thomas D.W."/>
            <person name="Thorpe A."/>
            <person name="Tracey A."/>
            <person name="Tromans A.C."/>
            <person name="Vaudin M."/>
            <person name="Wall M."/>
            <person name="Wallis J.M."/>
            <person name="Whitehead S.L."/>
            <person name="Whittaker P."/>
            <person name="Willey D.L."/>
            <person name="Williams L."/>
            <person name="Williams S.A."/>
            <person name="Wilming L."/>
            <person name="Wray P.W."/>
            <person name="Hubbard T."/>
            <person name="Durbin R.M."/>
            <person name="Bentley D.R."/>
            <person name="Beck S."/>
            <person name="Rogers J."/>
        </authorList>
    </citation>
    <scope>NUCLEOTIDE SEQUENCE [LARGE SCALE GENOMIC DNA]</scope>
</reference>
<reference key="4">
    <citation type="journal article" date="2004" name="Genome Res.">
        <title>The status, quality, and expansion of the NIH full-length cDNA project: the Mammalian Gene Collection (MGC).</title>
        <authorList>
            <consortium name="The MGC Project Team"/>
        </authorList>
    </citation>
    <scope>NUCLEOTIDE SEQUENCE [LARGE SCALE MRNA]</scope>
    <source>
        <tissue>Brain</tissue>
        <tissue>Pancreas</tissue>
    </source>
</reference>
<reference key="5">
    <citation type="journal article" date="2006" name="EMBO J.">
        <title>hRpn13/ADRM1/GP110 is a novel proteasome subunit that binds the deubiquitinating enzyme, UCH37.</title>
        <authorList>
            <person name="Qiu X.-B."/>
            <person name="Ouyang S.-Y."/>
            <person name="Li C.-J."/>
            <person name="Miao S."/>
            <person name="Wang L."/>
            <person name="Goldberg A.L."/>
        </authorList>
    </citation>
    <scope>FUNCTION</scope>
    <scope>INTERACTION WITH UCHL5</scope>
    <scope>SUBCELLULAR LOCATION</scope>
    <scope>IDENTIFICATION BY MASS SPECTROMETRY</scope>
</reference>
<reference key="6">
    <citation type="journal article" date="2006" name="J. Mol. Biol.">
        <title>Adrm1, a putative cell adhesion regulating protein, is a novel proteasome-associated factor.</title>
        <authorList>
            <person name="Joergensen J.P."/>
            <person name="Lauridsen A.-M."/>
            <person name="Kristensen P."/>
            <person name="Dissing K."/>
            <person name="Johnsen A.H."/>
            <person name="Hendil K.B."/>
            <person name="Hartmann-Petersen R."/>
        </authorList>
    </citation>
    <scope>FUNCTION</scope>
    <scope>INTERACTION WITH 26S PROTEASOME</scope>
    <scope>SUBCELLULAR LOCATION</scope>
    <scope>IDENTIFICATION BY MASS SPECTROMETRY</scope>
</reference>
<reference key="7">
    <citation type="journal article" date="2006" name="Nat. Biotechnol.">
        <title>A probability-based approach for high-throughput protein phosphorylation analysis and site localization.</title>
        <authorList>
            <person name="Beausoleil S.A."/>
            <person name="Villen J."/>
            <person name="Gerber S.A."/>
            <person name="Rush J."/>
            <person name="Gygi S.P."/>
        </authorList>
    </citation>
    <scope>PHOSPHORYLATION [LARGE SCALE ANALYSIS] AT THR-217</scope>
    <scope>IDENTIFICATION BY MASS SPECTROMETRY [LARGE SCALE ANALYSIS]</scope>
    <source>
        <tissue>Cervix carcinoma</tissue>
    </source>
</reference>
<reference key="8">
    <citation type="journal article" date="2006" name="Nat. Cell Biol.">
        <title>Proteasome recruitment and activation of the Uch37 deubiquitinating enzyme by Adrm1.</title>
        <authorList>
            <person name="Yao T."/>
            <person name="Song L."/>
            <person name="Xu W."/>
            <person name="DeMartino G.N."/>
            <person name="Florens L."/>
            <person name="Swanson S.K."/>
            <person name="Washburn M.P."/>
            <person name="Conaway R.C."/>
            <person name="Conaway J.W."/>
            <person name="Cohen R.E."/>
        </authorList>
    </citation>
    <scope>FUNCTION</scope>
    <scope>INTERACTION WITH PSMD1 AND UCHL5</scope>
    <scope>IDENTIFICATION BY MASS SPECTROMETRY</scope>
</reference>
<reference key="9">
    <citation type="journal article" date="2007" name="Biochemistry">
        <title>Mass spectrometric characterization of the affinity-purified human 26S proteasome complex.</title>
        <authorList>
            <person name="Wang X."/>
            <person name="Chen C.-F."/>
            <person name="Baker P.R."/>
            <person name="Chen P.-L."/>
            <person name="Kaiser P."/>
            <person name="Huang L."/>
        </authorList>
    </citation>
    <scope>IDENTIFICATION BY MASS SPECTROMETRY [LARGE SCALE ANALYSIS]</scope>
    <source>
        <tissue>Embryonic kidney</tissue>
    </source>
</reference>
<reference key="10">
    <citation type="journal article" date="2008" name="Nature">
        <title>Proteasome subunit Rpn13 is a novel ubiquitin receptor.</title>
        <authorList>
            <person name="Husnjak K."/>
            <person name="Elsasser S."/>
            <person name="Zhang N."/>
            <person name="Chen X."/>
            <person name="Randles L."/>
            <person name="Shi Y."/>
            <person name="Hofmann K."/>
            <person name="Walters K.J."/>
            <person name="Finley D."/>
            <person name="Dikic I."/>
        </authorList>
    </citation>
    <scope>FUNCTION</scope>
    <scope>INTERACTION WITH UBIQUITIN</scope>
    <scope>REGION</scope>
</reference>
<reference key="11">
    <citation type="journal article" date="2008" name="Proc. Natl. Acad. Sci. U.S.A.">
        <title>A quantitative atlas of mitotic phosphorylation.</title>
        <authorList>
            <person name="Dephoure N."/>
            <person name="Zhou C."/>
            <person name="Villen J."/>
            <person name="Beausoleil S.A."/>
            <person name="Bakalarski C.E."/>
            <person name="Elledge S.J."/>
            <person name="Gygi S.P."/>
        </authorList>
    </citation>
    <scope>PHOSPHORYLATION [LARGE SCALE ANALYSIS] AT SER-211 AND THR-217</scope>
    <scope>IDENTIFICATION BY MASS SPECTROMETRY [LARGE SCALE ANALYSIS]</scope>
    <source>
        <tissue>Cervix carcinoma</tissue>
    </source>
</reference>
<reference key="12">
    <citation type="journal article" date="2009" name="Anal. Chem.">
        <title>Lys-N and trypsin cover complementary parts of the phosphoproteome in a refined SCX-based approach.</title>
        <authorList>
            <person name="Gauci S."/>
            <person name="Helbig A.O."/>
            <person name="Slijper M."/>
            <person name="Krijgsveld J."/>
            <person name="Heck A.J."/>
            <person name="Mohammed S."/>
        </authorList>
    </citation>
    <scope>ACETYLATION [LARGE SCALE ANALYSIS] AT THR-2</scope>
    <scope>CLEAVAGE OF INITIATOR METHIONINE [LARGE SCALE ANALYSIS]</scope>
    <scope>IDENTIFICATION BY MASS SPECTROMETRY [LARGE SCALE ANALYSIS]</scope>
</reference>
<reference key="13">
    <citation type="journal article" date="2011" name="BMC Syst. Biol.">
        <title>Initial characterization of the human central proteome.</title>
        <authorList>
            <person name="Burkard T.R."/>
            <person name="Planyavsky M."/>
            <person name="Kaupe I."/>
            <person name="Breitwieser F.P."/>
            <person name="Buerckstuemmer T."/>
            <person name="Bennett K.L."/>
            <person name="Superti-Furga G."/>
            <person name="Colinge J."/>
        </authorList>
    </citation>
    <scope>IDENTIFICATION BY MASS SPECTROMETRY [LARGE SCALE ANALYSIS]</scope>
</reference>
<reference key="14">
    <citation type="journal article" date="2012" name="Mol. Cell. Proteomics">
        <title>Comparative large-scale characterisation of plant vs. mammal proteins reveals similar and idiosyncratic N-alpha acetylation features.</title>
        <authorList>
            <person name="Bienvenut W.V."/>
            <person name="Sumpton D."/>
            <person name="Martinez A."/>
            <person name="Lilla S."/>
            <person name="Espagne C."/>
            <person name="Meinnel T."/>
            <person name="Giglione C."/>
        </authorList>
    </citation>
    <scope>ACETYLATION [LARGE SCALE ANALYSIS] AT THR-2</scope>
    <scope>CLEAVAGE OF INITIATOR METHIONINE [LARGE SCALE ANALYSIS]</scope>
    <scope>IDENTIFICATION BY MASS SPECTROMETRY [LARGE SCALE ANALYSIS]</scope>
</reference>
<reference key="15">
    <citation type="journal article" date="2012" name="Proc. Natl. Acad. Sci. U.S.A.">
        <title>N-terminal acetylome analyses and functional insights of the N-terminal acetyltransferase NatB.</title>
        <authorList>
            <person name="Van Damme P."/>
            <person name="Lasa M."/>
            <person name="Polevoda B."/>
            <person name="Gazquez C."/>
            <person name="Elosegui-Artola A."/>
            <person name="Kim D.S."/>
            <person name="De Juan-Pardo E."/>
            <person name="Demeyer K."/>
            <person name="Hole K."/>
            <person name="Larrea E."/>
            <person name="Timmerman E."/>
            <person name="Prieto J."/>
            <person name="Arnesen T."/>
            <person name="Sherman F."/>
            <person name="Gevaert K."/>
            <person name="Aldabe R."/>
        </authorList>
    </citation>
    <scope>ACETYLATION [LARGE SCALE ANALYSIS] AT THR-2</scope>
    <scope>CLEAVAGE OF INITIATOR METHIONINE [LARGE SCALE ANALYSIS]</scope>
    <scope>IDENTIFICATION BY MASS SPECTROMETRY [LARGE SCALE ANALYSIS]</scope>
</reference>
<reference key="16">
    <citation type="journal article" date="2013" name="J. Proteome Res.">
        <title>Toward a comprehensive characterization of a human cancer cell phosphoproteome.</title>
        <authorList>
            <person name="Zhou H."/>
            <person name="Di Palma S."/>
            <person name="Preisinger C."/>
            <person name="Peng M."/>
            <person name="Polat A.N."/>
            <person name="Heck A.J."/>
            <person name="Mohammed S."/>
        </authorList>
    </citation>
    <scope>PHOSPHORYLATION [LARGE SCALE ANALYSIS] AT SER-15 AND THR-217</scope>
    <scope>IDENTIFICATION BY MASS SPECTROMETRY [LARGE SCALE ANALYSIS]</scope>
    <source>
        <tissue>Cervix carcinoma</tissue>
        <tissue>Erythroleukemia</tissue>
    </source>
</reference>
<reference key="17">
    <citation type="journal article" date="2014" name="EMBO J.">
        <title>Autoubiquitination of the 26S proteasome on Rpn13 regulates breakdown of ubiquitin conjugates.</title>
        <authorList>
            <person name="Besche H.C."/>
            <person name="Sha Z."/>
            <person name="Kukushkin N.V."/>
            <person name="Peth A."/>
            <person name="Hock E.M."/>
            <person name="Kim W."/>
            <person name="Gygi S."/>
            <person name="Gutierrez J.A."/>
            <person name="Liao H."/>
            <person name="Dick L."/>
            <person name="Goldberg A.L."/>
        </authorList>
    </citation>
    <scope>UBIQUITINATION</scope>
</reference>
<reference key="18">
    <citation type="journal article" date="2014" name="J. Proteomics">
        <title>An enzyme assisted RP-RPLC approach for in-depth analysis of human liver phosphoproteome.</title>
        <authorList>
            <person name="Bian Y."/>
            <person name="Song C."/>
            <person name="Cheng K."/>
            <person name="Dong M."/>
            <person name="Wang F."/>
            <person name="Huang J."/>
            <person name="Sun D."/>
            <person name="Wang L."/>
            <person name="Ye M."/>
            <person name="Zou H."/>
        </authorList>
    </citation>
    <scope>PHOSPHORYLATION [LARGE SCALE ANALYSIS] AT TYR-127 AND SER-140</scope>
    <scope>IDENTIFICATION BY MASS SPECTROMETRY [LARGE SCALE ANALYSIS]</scope>
    <source>
        <tissue>Liver</tissue>
    </source>
</reference>
<reference key="19">
    <citation type="journal article" date="2019" name="J. Biol. Chem.">
        <title>Acute unfolding of a single protein immediately stimulates recruitment of ubiquitin protein ligase E3C (UBE3C) to 26S proteasomes.</title>
        <authorList>
            <person name="Gottlieb C.D."/>
            <person name="Thompson A.C.S."/>
            <person name="Ordureau A."/>
            <person name="Harper J.W."/>
            <person name="Kopito R.R."/>
        </authorList>
    </citation>
    <scope>UBIQUITINATION</scope>
</reference>
<reference key="20">
    <citation type="journal article" date="2010" name="Mol. Cell">
        <title>Structure of proteasome ubiquitin receptor hRpn13 and its activation by the scaffolding protein hRpn2.</title>
        <authorList>
            <person name="Chen X."/>
            <person name="Lee B.H."/>
            <person name="Finley D."/>
            <person name="Walters K.J."/>
        </authorList>
    </citation>
    <scope>STRUCTURE BY NMR OF 1-407</scope>
    <scope>INTERACTION WITH PSMD1</scope>
    <scope>REGION</scope>
</reference>
<reference key="21">
    <citation type="journal article" date="2014" name="Protein Cell">
        <title>Mechanism of the Rpn13-induced activation of Uch37.</title>
        <authorList>
            <person name="Jiao L."/>
            <person name="Ouyang S."/>
            <person name="Shaw N."/>
            <person name="Song G."/>
            <person name="Feng Y."/>
            <person name="Niu F."/>
            <person name="Qiu W."/>
            <person name="Zhu H."/>
            <person name="Hung L.W."/>
            <person name="Zuo X."/>
            <person name="Eleonora Shtykova V."/>
            <person name="Zhu P."/>
            <person name="Dong Y.H."/>
            <person name="Xu R."/>
            <person name="Liu Z.J."/>
        </authorList>
    </citation>
    <scope>STRUCTURE BY NMR OF 270-407</scope>
    <scope>INTERACTION WITH UCHL5</scope>
    <scope>FUNCTION</scope>
</reference>
<reference key="22">
    <citation type="journal article" date="2015" name="Mol. Cell">
        <title>Mechanism of UCH-L5 activation and inhibition by DEUBAD domains in RPN13 and INO80G.</title>
        <authorList>
            <person name="Sahtoe D.D."/>
            <person name="van Dijk W.J."/>
            <person name="El Oualid F."/>
            <person name="Ekkebus R."/>
            <person name="Ovaa H."/>
            <person name="Sixma T.K."/>
        </authorList>
    </citation>
    <scope>X-RAY CRYSTALLOGRAPHY (2.30 ANGSTROMS) OF 266-388</scope>
    <scope>INTERACTION WITH UCHL5</scope>
    <scope>FUNCTION</scope>
</reference>
<reference key="23">
    <citation type="journal article" date="2015" name="Mol. Cell">
        <title>Structural basis for the activation and inhibition of the UCH37 deubiquitylase.</title>
        <authorList>
            <person name="VanderLinden R.T."/>
            <person name="Hemmis C.W."/>
            <person name="Schmitt B."/>
            <person name="Ndoja A."/>
            <person name="Whitby F.G."/>
            <person name="Robinson H."/>
            <person name="Cohen R.E."/>
            <person name="Yao T."/>
            <person name="Hill C.P."/>
        </authorList>
    </citation>
    <scope>X-RAY CRYSTALLOGRAPHY (2.00 ANGSTROMS) OF 285-386</scope>
    <scope>INTERACTION WITH UCHL5</scope>
    <scope>FUNCTION</scope>
</reference>
<reference key="24">
    <citation type="journal article" date="2016" name="Structure">
        <title>Structures of Rpn1 T1:Rad23 and hRpn13:hPLIC2 reveal distinct binding mechanisms between substrate receptors and shuttle factors of the proteasome.</title>
        <authorList>
            <person name="Chen X."/>
            <person name="Randles L."/>
            <person name="Shi K."/>
            <person name="Tarasov S.G."/>
            <person name="Aihara H."/>
            <person name="Walters K.J."/>
        </authorList>
    </citation>
    <scope>STRUCTURE BY NMR OF 1-150</scope>
    <scope>INTERACTION WITH UBIQUITIN AND UBQLN2</scope>
</reference>
<organism>
    <name type="scientific">Homo sapiens</name>
    <name type="common">Human</name>
    <dbReference type="NCBI Taxonomy" id="9606"/>
    <lineage>
        <taxon>Eukaryota</taxon>
        <taxon>Metazoa</taxon>
        <taxon>Chordata</taxon>
        <taxon>Craniata</taxon>
        <taxon>Vertebrata</taxon>
        <taxon>Euteleostomi</taxon>
        <taxon>Mammalia</taxon>
        <taxon>Eutheria</taxon>
        <taxon>Euarchontoglires</taxon>
        <taxon>Primates</taxon>
        <taxon>Haplorrhini</taxon>
        <taxon>Catarrhini</taxon>
        <taxon>Hominidae</taxon>
        <taxon>Homo</taxon>
    </lineage>
</organism>
<evidence type="ECO:0000250" key="1">
    <source>
        <dbReference type="UniProtKB" id="Q9JMB5"/>
    </source>
</evidence>
<evidence type="ECO:0000255" key="2">
    <source>
        <dbReference type="PROSITE-ProRule" id="PRU01264"/>
    </source>
</evidence>
<evidence type="ECO:0000255" key="3">
    <source>
        <dbReference type="PROSITE-ProRule" id="PRU01265"/>
    </source>
</evidence>
<evidence type="ECO:0000256" key="4">
    <source>
        <dbReference type="SAM" id="MobiDB-lite"/>
    </source>
</evidence>
<evidence type="ECO:0000269" key="5">
    <source>
    </source>
</evidence>
<evidence type="ECO:0000269" key="6">
    <source>
    </source>
</evidence>
<evidence type="ECO:0000269" key="7">
    <source>
    </source>
</evidence>
<evidence type="ECO:0000269" key="8">
    <source>
    </source>
</evidence>
<evidence type="ECO:0000269" key="9">
    <source>
    </source>
</evidence>
<evidence type="ECO:0000269" key="10">
    <source>
    </source>
</evidence>
<evidence type="ECO:0000269" key="11">
    <source>
    </source>
</evidence>
<evidence type="ECO:0000269" key="12">
    <source>
    </source>
</evidence>
<evidence type="ECO:0000269" key="13">
    <source>
    </source>
</evidence>
<evidence type="ECO:0000269" key="14">
    <source>
    </source>
</evidence>
<evidence type="ECO:0000269" key="15">
    <source>
    </source>
</evidence>
<evidence type="ECO:0000269" key="16">
    <source>
    </source>
</evidence>
<evidence type="ECO:0000305" key="17"/>
<evidence type="ECO:0007744" key="18">
    <source>
    </source>
</evidence>
<evidence type="ECO:0007744" key="19">
    <source>
    </source>
</evidence>
<evidence type="ECO:0007744" key="20">
    <source>
    </source>
</evidence>
<evidence type="ECO:0007744" key="21">
    <source>
    </source>
</evidence>
<evidence type="ECO:0007744" key="22">
    <source>
    </source>
</evidence>
<evidence type="ECO:0007744" key="23">
    <source>
    </source>
</evidence>
<evidence type="ECO:0007744" key="24">
    <source>
    </source>
</evidence>
<evidence type="ECO:0007829" key="25">
    <source>
        <dbReference type="PDB" id="2KQZ"/>
    </source>
</evidence>
<evidence type="ECO:0007829" key="26">
    <source>
        <dbReference type="PDB" id="2KR0"/>
    </source>
</evidence>
<evidence type="ECO:0007829" key="27">
    <source>
        <dbReference type="PDB" id="2MKZ"/>
    </source>
</evidence>
<evidence type="ECO:0007829" key="28">
    <source>
        <dbReference type="PDB" id="4UEM"/>
    </source>
</evidence>
<evidence type="ECO:0007829" key="29">
    <source>
        <dbReference type="PDB" id="4WLR"/>
    </source>
</evidence>
<evidence type="ECO:0007829" key="30">
    <source>
        <dbReference type="PDB" id="5V1Y"/>
    </source>
</evidence>
<evidence type="ECO:0007829" key="31">
    <source>
        <dbReference type="PDB" id="6OI4"/>
    </source>
</evidence>
<proteinExistence type="evidence at protein level"/>
<comment type="function">
    <text evidence="5 6 7 8 9 11 13 14">Component of the 26S proteasome, a multiprotein complex involved in the ATP-dependent degradation of ubiquitinated proteins (PubMed:16815440, PubMed:16906146, PubMed:16990800, PubMed:17139257, PubMed:18497817, PubMed:24752541, PubMed:25702870, PubMed:25702872). This complex plays a key role in the maintenance of protein homeostasis by removing misfolded or damaged proteins, which could impair cellular functions, and by removing proteins whose functions are no longer required (PubMed:16815440, PubMed:16906146, PubMed:16990800, PubMed:17139257, PubMed:18497817, PubMed:24752541, PubMed:25702870, PubMed:25702872). Therefore, the proteasome participates in numerous cellular processes, including cell cycle progression, apoptosis, or DNA damage repair (PubMed:16815440, PubMed:16906146, PubMed:16990800, PubMed:17139257, PubMed:18497817, PubMed:24752541, PubMed:25702870, PubMed:25702872). Within the complex, functions as a proteasomal ubiquitin receptor (PubMed:18497817). Engages and activates 19S-associated deubiquitinases UCHL5 and PSMD14 during protein degradation (PubMed:16906146, PubMed:16990800, PubMed:17139257, PubMed:24752541). UCHL5 reversibly associate with the 19S regulatory particle whereas PSMD14 is an intrinsic subunit of the proteasome lid subcomplex (PubMed:16906146, PubMed:16990800, PubMed:17139257, PubMed:24752541).</text>
</comment>
<comment type="subunit">
    <text evidence="5 6 7 8 9 10 11 14 15">Component of the 19S proteasome regulatory particle complex. The 26S proteasome consists of a 20S core particle (CP) and two 19S regulatory subunits (RP) (PubMed:16990800). Interacts with the proteasomal scaffolding protein PSMD1 (PubMed:16815440, PubMed:16906146, PubMed:16990800, PubMed:20471946). Interacts with deubiquitinase UCHL5; this interaction activates the auto-inhibited UCHL5 by deoligomerizing it (PubMed:17139257, PubMed:24752541, PubMed:25702870, PubMed:25702872). Interacts with UBQLN2 and ubiquitin (PubMed:27396824).</text>
</comment>
<comment type="interaction">
    <interactant intactId="EBI-954387">
        <id>Q16186</id>
    </interactant>
    <interactant intactId="EBI-357874">
        <id>Q99460</id>
        <label>PSMD1</label>
    </interactant>
    <organismsDiffer>false</organismsDiffer>
    <experiments>7</experiments>
</comment>
<comment type="interaction">
    <interactant intactId="EBI-954387">
        <id>Q16186</id>
    </interactant>
    <interactant intactId="EBI-357648">
        <id>Q13200</id>
        <label>PSMD2</label>
    </interactant>
    <organismsDiffer>false</organismsDiffer>
    <experiments>5</experiments>
</comment>
<comment type="interaction">
    <interactant intactId="EBI-954387">
        <id>Q16186</id>
    </interactant>
    <interactant intactId="EBI-359318">
        <id>P55036</id>
        <label>PSMD4</label>
    </interactant>
    <organismsDiffer>false</organismsDiffer>
    <experiments>6</experiments>
</comment>
<comment type="interaction">
    <interactant intactId="EBI-954387">
        <id>Q16186</id>
    </interactant>
    <interactant intactId="EBI-954531">
        <id>P54727</id>
        <label>RAD23B</label>
    </interactant>
    <organismsDiffer>false</organismsDiffer>
    <experiments>2</experiments>
</comment>
<comment type="interaction">
    <interactant intactId="EBI-954387">
        <id>Q16186</id>
    </interactant>
    <interactant intactId="EBI-3390054">
        <id>P0CG48</id>
        <label>UBC</label>
    </interactant>
    <organismsDiffer>false</organismsDiffer>
    <experiments>11</experiments>
</comment>
<comment type="interaction">
    <interactant intactId="EBI-954387">
        <id>Q16186</id>
    </interactant>
    <interactant intactId="EBI-741480">
        <id>Q9UMX0</id>
        <label>UBQLN1</label>
    </interactant>
    <organismsDiffer>false</organismsDiffer>
    <experiments>4</experiments>
</comment>
<comment type="interaction">
    <interactant intactId="EBI-954387">
        <id>Q16186</id>
    </interactant>
    <interactant intactId="EBI-947187">
        <id>Q9UHD9</id>
        <label>UBQLN2</label>
    </interactant>
    <organismsDiffer>false</organismsDiffer>
    <experiments>5</experiments>
</comment>
<comment type="interaction">
    <interactant intactId="EBI-954387">
        <id>Q16186</id>
    </interactant>
    <interactant intactId="EBI-1051183">
        <id>Q9Y5K5</id>
        <label>UCHL5</label>
    </interactant>
    <organismsDiffer>false</organismsDiffer>
    <experiments>23</experiments>
</comment>
<comment type="interaction">
    <interactant intactId="EBI-954387">
        <id>Q16186</id>
    </interactant>
    <interactant intactId="EBI-11749875">
        <id>Q9Y5K5-3</id>
        <label>UCHL5</label>
    </interactant>
    <organismsDiffer>false</organismsDiffer>
    <experiments>5</experiments>
</comment>
<comment type="interaction">
    <interactant intactId="EBI-954387">
        <id>Q16186</id>
    </interactant>
    <interactant intactId="EBI-6174">
        <id>P48510</id>
        <label>DSK2</label>
    </interactant>
    <organismsDiffer>true</organismsDiffer>
    <experiments>4</experiments>
</comment>
<comment type="interaction">
    <interactant intactId="EBI-954387">
        <id>Q16186</id>
    </interactant>
    <interactant intactId="EBI-772796">
        <id>O35593</id>
        <label>Psmd14</label>
    </interactant>
    <organismsDiffer>true</organismsDiffer>
    <experiments>2</experiments>
</comment>
<comment type="subcellular location">
    <subcellularLocation>
        <location evidence="7">Cytoplasm</location>
    </subcellularLocation>
    <subcellularLocation>
        <location evidence="7">Nucleus</location>
    </subcellularLocation>
</comment>
<comment type="domain">
    <text evidence="9">The Pru (pleckstrin-like receptor for ubiquitin) domain mediates interactions with PSMD1 and ubiquitin. Preferential binding to the proximal subunit of 'Lys-48'-linked diubiquitin allows UCHL5 access to the distal subunit.</text>
</comment>
<comment type="PTM">
    <text evidence="12 16">Ubiquitinated by UBE3C in response to proteotoxic stress.</text>
</comment>
<comment type="similarity">
    <text evidence="17">Belongs to the ADRM1 family.</text>
</comment>
<comment type="caution">
    <text evidence="17">Although initially described as a cell membrane glycoprotein, ADRM1 is intracellular and non-glycosylated, and has probably no direct role in cell adhesion.</text>
</comment>
<name>ADRM1_HUMAN</name>
<feature type="initiator methionine" description="Removed" evidence="20 21 22">
    <location>
        <position position="1"/>
    </location>
</feature>
<feature type="chain" id="PRO_0000020631" description="Proteasomal ubiquitin receptor ADRM1">
    <location>
        <begin position="2"/>
        <end position="407"/>
    </location>
</feature>
<feature type="domain" description="Pru" evidence="3 9">
    <location>
        <begin position="18"/>
        <end position="131"/>
    </location>
</feature>
<feature type="domain" description="DEUBAD" evidence="2">
    <location>
        <begin position="277"/>
        <end position="391"/>
    </location>
</feature>
<feature type="region of interest" description="Disordered" evidence="4">
    <location>
        <begin position="194"/>
        <end position="259"/>
    </location>
</feature>
<feature type="region of interest" description="Interaction with UCHL5" evidence="10">
    <location>
        <begin position="253"/>
        <end position="407"/>
    </location>
</feature>
<feature type="region of interest" description="Disordered" evidence="4">
    <location>
        <begin position="379"/>
        <end position="407"/>
    </location>
</feature>
<feature type="compositionally biased region" description="Basic and acidic residues" evidence="4">
    <location>
        <begin position="387"/>
        <end position="398"/>
    </location>
</feature>
<feature type="modified residue" description="N-acetylthreonine" evidence="20 21 22">
    <location>
        <position position="2"/>
    </location>
</feature>
<feature type="modified residue" description="Phosphoserine" evidence="23">
    <location>
        <position position="15"/>
    </location>
</feature>
<feature type="modified residue" description="Phosphotyrosine" evidence="24">
    <location>
        <position position="127"/>
    </location>
</feature>
<feature type="modified residue" description="Phosphoserine" evidence="24">
    <location>
        <position position="140"/>
    </location>
</feature>
<feature type="modified residue" description="Phosphoserine" evidence="19">
    <location>
        <position position="211"/>
    </location>
</feature>
<feature type="modified residue" description="Phosphothreonine" evidence="18 19 23">
    <location>
        <position position="217"/>
    </location>
</feature>
<feature type="modified residue" description="Phosphoserine" evidence="1">
    <location>
        <position position="405"/>
    </location>
</feature>
<feature type="cross-link" description="Glycyl lysine isopeptide (Lys-Gly) (interchain with G-Cter in ubiquitin)">
    <location>
        <position position="34"/>
    </location>
</feature>
<feature type="sequence conflict" description="In Ref. 1; BAA11023." evidence="17" ref="1">
    <original>S</original>
    <variation>T</variation>
    <location>
        <position position="142"/>
    </location>
</feature>
<feature type="strand" evidence="30">
    <location>
        <begin position="23"/>
        <end position="34"/>
    </location>
</feature>
<feature type="strand" evidence="30">
    <location>
        <begin position="37"/>
        <end position="40"/>
    </location>
</feature>
<feature type="strand" evidence="30">
    <location>
        <begin position="45"/>
        <end position="51"/>
    </location>
</feature>
<feature type="strand" evidence="30">
    <location>
        <begin position="57"/>
        <end position="63"/>
    </location>
</feature>
<feature type="turn" evidence="30">
    <location>
        <begin position="64"/>
        <end position="66"/>
    </location>
</feature>
<feature type="strand" evidence="30">
    <location>
        <begin position="69"/>
        <end position="75"/>
    </location>
</feature>
<feature type="strand" evidence="30">
    <location>
        <begin position="79"/>
        <end position="84"/>
    </location>
</feature>
<feature type="strand" evidence="30">
    <location>
        <begin position="89"/>
        <end position="91"/>
    </location>
</feature>
<feature type="strand" evidence="30">
    <location>
        <begin position="93"/>
        <end position="98"/>
    </location>
</feature>
<feature type="helix" evidence="31">
    <location>
        <begin position="99"/>
        <end position="101"/>
    </location>
</feature>
<feature type="strand" evidence="30">
    <location>
        <begin position="104"/>
        <end position="109"/>
    </location>
</feature>
<feature type="strand" evidence="30">
    <location>
        <begin position="111"/>
        <end position="114"/>
    </location>
</feature>
<feature type="helix" evidence="30">
    <location>
        <begin position="117"/>
        <end position="129"/>
    </location>
</feature>
<feature type="turn" evidence="26">
    <location>
        <begin position="191"/>
        <end position="195"/>
    </location>
</feature>
<feature type="strand" evidence="26">
    <location>
        <begin position="202"/>
        <end position="204"/>
    </location>
</feature>
<feature type="strand" evidence="26">
    <location>
        <begin position="249"/>
        <end position="253"/>
    </location>
</feature>
<feature type="turn" evidence="26">
    <location>
        <begin position="254"/>
        <end position="256"/>
    </location>
</feature>
<feature type="helix" evidence="25">
    <location>
        <begin position="266"/>
        <end position="273"/>
    </location>
</feature>
<feature type="strand" evidence="26">
    <location>
        <begin position="276"/>
        <end position="278"/>
    </location>
</feature>
<feature type="strand" evidence="25">
    <location>
        <begin position="282"/>
        <end position="284"/>
    </location>
</feature>
<feature type="helix" evidence="29">
    <location>
        <begin position="288"/>
        <end position="291"/>
    </location>
</feature>
<feature type="helix" evidence="29">
    <location>
        <begin position="294"/>
        <end position="297"/>
    </location>
</feature>
<feature type="helix" evidence="29">
    <location>
        <begin position="300"/>
        <end position="302"/>
    </location>
</feature>
<feature type="helix" evidence="29">
    <location>
        <begin position="304"/>
        <end position="310"/>
    </location>
</feature>
<feature type="helix" evidence="29">
    <location>
        <begin position="311"/>
        <end position="313"/>
    </location>
</feature>
<feature type="helix" evidence="29">
    <location>
        <begin position="324"/>
        <end position="326"/>
    </location>
</feature>
<feature type="helix" evidence="29">
    <location>
        <begin position="327"/>
        <end position="332"/>
    </location>
</feature>
<feature type="helix" evidence="29">
    <location>
        <begin position="334"/>
        <end position="348"/>
    </location>
</feature>
<feature type="turn" evidence="28">
    <location>
        <begin position="349"/>
        <end position="351"/>
    </location>
</feature>
<feature type="helix" evidence="29">
    <location>
        <begin position="353"/>
        <end position="358"/>
    </location>
</feature>
<feature type="helix" evidence="29">
    <location>
        <begin position="363"/>
        <end position="371"/>
    </location>
</feature>
<feature type="helix" evidence="29">
    <location>
        <begin position="374"/>
        <end position="383"/>
    </location>
</feature>
<feature type="strand" evidence="26">
    <location>
        <begin position="386"/>
        <end position="388"/>
    </location>
</feature>
<feature type="strand" evidence="27">
    <location>
        <begin position="395"/>
        <end position="397"/>
    </location>
</feature>
<gene>
    <name type="primary">ADRM1</name>
    <name type="synonym">GP110</name>
</gene>
<sequence length="407" mass="42153">MTTSGALFPSLVPGSRGASNKYLVEFRAGKMSLKGTTVTPDKRKGLVYIQQTDDSLIHFCWKDRTSGNVEDDLIIFPDDCEFKRVPQCPSGRVYVLKFKAGSKRLFFWMQEPKTDQDEEHCRKVNEYLNNPPMPGALGASGSSGHELSALGGEGGLQSLLGNMSHSQLMQLIGPAGLGGLGGLGALTGPGLASLLGSSGPPGSSSSSSSRSQSAAVTPSSTTSSTRATPAPSAPAAASATSPSPAPSSGNGASTAASPTQPIQLSDLQSILATMNVPAGPAGGQQVDLASVLTPEIMAPILANADVQERLLPYLPSGESLPQTADEIQNTLTSPQFQQALGMFSAALASGQLGPLMCQFGLPAEAVEAANKGDVEAFAKAMQNNAKPEQKEGDTKDKKDEEEDMSLD</sequence>